<accession>Q9RGS4</accession>
<accession>B9DMG7</accession>
<dbReference type="EMBL" id="AM295250">
    <property type="protein sequence ID" value="CAL28497.1"/>
    <property type="molecule type" value="Genomic_DNA"/>
</dbReference>
<dbReference type="EMBL" id="AF109218">
    <property type="protein sequence ID" value="AAF25545.1"/>
    <property type="molecule type" value="Genomic_DNA"/>
</dbReference>
<dbReference type="RefSeq" id="WP_015900837.1">
    <property type="nucleotide sequence ID" value="NC_012121.1"/>
</dbReference>
<dbReference type="SMR" id="Q9RGS4"/>
<dbReference type="GeneID" id="93794047"/>
<dbReference type="KEGG" id="sca:SCA_1592"/>
<dbReference type="eggNOG" id="COG0706">
    <property type="taxonomic scope" value="Bacteria"/>
</dbReference>
<dbReference type="HOGENOM" id="CLU_036138_5_2_9"/>
<dbReference type="OrthoDB" id="9780552at2"/>
<dbReference type="BioCyc" id="SCAR396513:SCA_RS08085-MONOMER"/>
<dbReference type="Proteomes" id="UP000000444">
    <property type="component" value="Chromosome"/>
</dbReference>
<dbReference type="GO" id="GO:0005886">
    <property type="term" value="C:plasma membrane"/>
    <property type="evidence" value="ECO:0007669"/>
    <property type="project" value="UniProtKB-SubCell"/>
</dbReference>
<dbReference type="GO" id="GO:0032977">
    <property type="term" value="F:membrane insertase activity"/>
    <property type="evidence" value="ECO:0007669"/>
    <property type="project" value="InterPro"/>
</dbReference>
<dbReference type="GO" id="GO:0051205">
    <property type="term" value="P:protein insertion into membrane"/>
    <property type="evidence" value="ECO:0007669"/>
    <property type="project" value="TreeGrafter"/>
</dbReference>
<dbReference type="GO" id="GO:0015031">
    <property type="term" value="P:protein transport"/>
    <property type="evidence" value="ECO:0007669"/>
    <property type="project" value="UniProtKB-KW"/>
</dbReference>
<dbReference type="CDD" id="cd20070">
    <property type="entry name" value="5TM_YidC_Alb3"/>
    <property type="match status" value="1"/>
</dbReference>
<dbReference type="HAMAP" id="MF_01811">
    <property type="entry name" value="YidC_type2"/>
    <property type="match status" value="1"/>
</dbReference>
<dbReference type="InterPro" id="IPR001708">
    <property type="entry name" value="YidC/ALB3/OXA1/COX18"/>
</dbReference>
<dbReference type="InterPro" id="IPR028055">
    <property type="entry name" value="YidC/Oxa/ALB_C"/>
</dbReference>
<dbReference type="InterPro" id="IPR023060">
    <property type="entry name" value="YidC/YidC1/YidC2_Firmicutes"/>
</dbReference>
<dbReference type="InterPro" id="IPR047196">
    <property type="entry name" value="YidC_ALB_C"/>
</dbReference>
<dbReference type="NCBIfam" id="TIGR03592">
    <property type="entry name" value="yidC_oxa1_cterm"/>
    <property type="match status" value="1"/>
</dbReference>
<dbReference type="PANTHER" id="PTHR12428:SF65">
    <property type="entry name" value="CYTOCHROME C OXIDASE ASSEMBLY PROTEIN COX18, MITOCHONDRIAL"/>
    <property type="match status" value="1"/>
</dbReference>
<dbReference type="PANTHER" id="PTHR12428">
    <property type="entry name" value="OXA1"/>
    <property type="match status" value="1"/>
</dbReference>
<dbReference type="Pfam" id="PF02096">
    <property type="entry name" value="60KD_IMP"/>
    <property type="match status" value="1"/>
</dbReference>
<dbReference type="PRINTS" id="PR00701">
    <property type="entry name" value="60KDINNERMP"/>
</dbReference>
<dbReference type="PROSITE" id="PS51257">
    <property type="entry name" value="PROKAR_LIPOPROTEIN"/>
    <property type="match status" value="1"/>
</dbReference>
<proteinExistence type="inferred from homology"/>
<protein>
    <recommendedName>
        <fullName evidence="1">Membrane protein insertase YidC</fullName>
    </recommendedName>
    <alternativeName>
        <fullName evidence="1">Foldase YidC</fullName>
    </alternativeName>
    <alternativeName>
        <fullName evidence="1">Membrane integrase YidC</fullName>
    </alternativeName>
    <alternativeName>
        <fullName evidence="1">Membrane protein YidC</fullName>
    </alternativeName>
</protein>
<keyword id="KW-1003">Cell membrane</keyword>
<keyword id="KW-0143">Chaperone</keyword>
<keyword id="KW-0449">Lipoprotein</keyword>
<keyword id="KW-0472">Membrane</keyword>
<keyword id="KW-0564">Palmitate</keyword>
<keyword id="KW-0653">Protein transport</keyword>
<keyword id="KW-1185">Reference proteome</keyword>
<keyword id="KW-0732">Signal</keyword>
<keyword id="KW-0812">Transmembrane</keyword>
<keyword id="KW-1133">Transmembrane helix</keyword>
<keyword id="KW-0813">Transport</keyword>
<gene>
    <name evidence="1" type="primary">yidC</name>
    <name type="ordered locus">Sca_1592</name>
</gene>
<sequence length="289" mass="32825">MKKKALLPLLLGIMVFLAGCDYSKPENRTGFFYNTFVKNMDNIIHWLGASFNNDYGLAIIVLVLAIRIIVLPFMLSNYKNSHMMREKMIIAKPDMDAVKEKVQRARTQEDKMAANQEMMEVYKKYDMNPMQSMLGCLPMLIQMPIIMGLFFVLKYPSPGGITEHSHFLWFNLAKPDIWITVIAGVLYFLQAYVSTFSMPPEQKQMSYMMMIISPIMIIWVSLSSAAALGLYWSVSAAFLIVQTYIANAYYSKKAKEEVAPMIAAYEKEHGGSGNSKGAKVVSKKNKKKK</sequence>
<feature type="signal peptide" evidence="1">
    <location>
        <begin position="1"/>
        <end position="19"/>
    </location>
</feature>
<feature type="chain" id="PRO_0000020397" description="Membrane protein insertase YidC">
    <location>
        <begin position="20"/>
        <end position="289"/>
    </location>
</feature>
<feature type="transmembrane region" description="Helical" evidence="1">
    <location>
        <begin position="55"/>
        <end position="75"/>
    </location>
</feature>
<feature type="transmembrane region" description="Helical" evidence="1">
    <location>
        <begin position="133"/>
        <end position="153"/>
    </location>
</feature>
<feature type="transmembrane region" description="Helical" evidence="1">
    <location>
        <begin position="177"/>
        <end position="197"/>
    </location>
</feature>
<feature type="transmembrane region" description="Helical" evidence="1">
    <location>
        <begin position="210"/>
        <end position="230"/>
    </location>
</feature>
<feature type="transmembrane region" description="Helical" evidence="1">
    <location>
        <begin position="231"/>
        <end position="251"/>
    </location>
</feature>
<feature type="region of interest" description="Disordered" evidence="2">
    <location>
        <begin position="268"/>
        <end position="289"/>
    </location>
</feature>
<feature type="lipid moiety-binding region" description="N-palmitoyl cysteine" evidence="1">
    <location>
        <position position="20"/>
    </location>
</feature>
<feature type="lipid moiety-binding region" description="S-diacylglycerol cysteine" evidence="1">
    <location>
        <position position="20"/>
    </location>
</feature>
<feature type="sequence conflict" description="In Ref. 2; AAF25545." evidence="3" ref="2">
    <original>S</original>
    <variation>T</variation>
    <location>
        <position position="223"/>
    </location>
</feature>
<organism>
    <name type="scientific">Staphylococcus carnosus (strain TM300)</name>
    <dbReference type="NCBI Taxonomy" id="396513"/>
    <lineage>
        <taxon>Bacteria</taxon>
        <taxon>Bacillati</taxon>
        <taxon>Bacillota</taxon>
        <taxon>Bacilli</taxon>
        <taxon>Bacillales</taxon>
        <taxon>Staphylococcaceae</taxon>
        <taxon>Staphylococcus</taxon>
    </lineage>
</organism>
<name>YIDC_STACT</name>
<reference key="1">
    <citation type="journal article" date="2009" name="Appl. Environ. Microbiol.">
        <title>Genome analysis of the meat starter culture bacterium Staphylococcus carnosus TM300.</title>
        <authorList>
            <person name="Rosenstein R."/>
            <person name="Nerz C."/>
            <person name="Biswas L."/>
            <person name="Resch A."/>
            <person name="Raddatz G."/>
            <person name="Schuster S.C."/>
            <person name="Goetz F."/>
        </authorList>
    </citation>
    <scope>NUCLEOTIDE SEQUENCE [LARGE SCALE GENOMIC DNA]</scope>
    <source>
        <strain>TM300</strain>
    </source>
</reference>
<reference key="2">
    <citation type="submission" date="1998-11" db="EMBL/GenBank/DDBJ databases">
        <title>Identification of an operon involved in thiamin biosynthesis in Staphylococcus carnosus TM300.</title>
        <authorList>
            <person name="Krismer B."/>
            <person name="Goetz F."/>
        </authorList>
    </citation>
    <scope>NUCLEOTIDE SEQUENCE [GENOMIC DNA] OF 1-225</scope>
</reference>
<comment type="function">
    <text evidence="1">Required for the insertion and/or proper folding and/or complex formation of integral membrane proteins into the membrane. Involved in integration of membrane proteins that insert both dependently and independently of the Sec translocase complex, as well as at least some lipoproteins.</text>
</comment>
<comment type="subcellular location">
    <subcellularLocation>
        <location evidence="1">Cell membrane</location>
        <topology evidence="1">Multi-pass membrane protein</topology>
    </subcellularLocation>
</comment>
<comment type="similarity">
    <text evidence="1">Belongs to the OXA1/ALB3/YidC family. Type 2 subfamily.</text>
</comment>
<evidence type="ECO:0000255" key="1">
    <source>
        <dbReference type="HAMAP-Rule" id="MF_01811"/>
    </source>
</evidence>
<evidence type="ECO:0000256" key="2">
    <source>
        <dbReference type="SAM" id="MobiDB-lite"/>
    </source>
</evidence>
<evidence type="ECO:0000305" key="3"/>